<comment type="function">
    <text evidence="1">Part of ribonuclease P, a protein complex that generates mature tRNA molecules by cleaving their 5'-ends.</text>
</comment>
<comment type="catalytic activity">
    <reaction evidence="1">
        <text>Endonucleolytic cleavage of RNA, removing 5'-extranucleotides from tRNA precursor.</text>
        <dbReference type="EC" id="3.1.26.5"/>
    </reaction>
</comment>
<comment type="subunit">
    <text evidence="1">Consists of a catalytic RNA component and at least 4-5 protein subunits.</text>
</comment>
<comment type="subcellular location">
    <subcellularLocation>
        <location evidence="1">Cytoplasm</location>
    </subcellularLocation>
</comment>
<comment type="similarity">
    <text evidence="1">Belongs to the eukaryotic/archaeal RNase P protein component 2 family.</text>
</comment>
<sequence length="161" mass="17554">MKHLPKHLRPRWRYLAVGLESWPDADIDRRAFQRELWFAAQNLIGDAGSAALDGSVLHFRFEDGDGEAVIRARRGEVDALRAVLATLSTVDGHPLGVVVRGVSGTVRACEEKYIRGPQEGTEERTVAFAGADRPAVVRNDRVTVELSGGPVGATALDIRDN</sequence>
<feature type="chain" id="PRO_1000148370" description="Ribonuclease P protein component 2">
    <location>
        <begin position="1"/>
        <end position="161"/>
    </location>
</feature>
<dbReference type="EC" id="3.1.26.5" evidence="1"/>
<dbReference type="EMBL" id="CR936257">
    <property type="protein sequence ID" value="CAI49959.1"/>
    <property type="molecule type" value="Genomic_DNA"/>
</dbReference>
<dbReference type="RefSeq" id="WP_011323576.1">
    <property type="nucleotide sequence ID" value="NC_007426.1"/>
</dbReference>
<dbReference type="SMR" id="Q3IPJ2"/>
<dbReference type="STRING" id="348780.NP_3736A"/>
<dbReference type="EnsemblBacteria" id="CAI49959">
    <property type="protein sequence ID" value="CAI49959"/>
    <property type="gene ID" value="NP_3736A"/>
</dbReference>
<dbReference type="GeneID" id="3703113"/>
<dbReference type="KEGG" id="nph:NP_3736A"/>
<dbReference type="eggNOG" id="arCOG01365">
    <property type="taxonomic scope" value="Archaea"/>
</dbReference>
<dbReference type="HOGENOM" id="CLU_137733_0_0_2"/>
<dbReference type="OrthoDB" id="19261at2157"/>
<dbReference type="Proteomes" id="UP000002698">
    <property type="component" value="Chromosome"/>
</dbReference>
<dbReference type="GO" id="GO:0005737">
    <property type="term" value="C:cytoplasm"/>
    <property type="evidence" value="ECO:0007669"/>
    <property type="project" value="UniProtKB-SubCell"/>
</dbReference>
<dbReference type="GO" id="GO:0030677">
    <property type="term" value="C:ribonuclease P complex"/>
    <property type="evidence" value="ECO:0007669"/>
    <property type="project" value="UniProtKB-UniRule"/>
</dbReference>
<dbReference type="GO" id="GO:0004526">
    <property type="term" value="F:ribonuclease P activity"/>
    <property type="evidence" value="ECO:0007669"/>
    <property type="project" value="UniProtKB-UniRule"/>
</dbReference>
<dbReference type="GO" id="GO:0001682">
    <property type="term" value="P:tRNA 5'-leader removal"/>
    <property type="evidence" value="ECO:0007669"/>
    <property type="project" value="UniProtKB-UniRule"/>
</dbReference>
<dbReference type="Gene3D" id="3.30.70.3250">
    <property type="entry name" value="Ribonuclease P, Pop5 subunit"/>
    <property type="match status" value="1"/>
</dbReference>
<dbReference type="HAMAP" id="MF_00755">
    <property type="entry name" value="RNase_P_2"/>
    <property type="match status" value="1"/>
</dbReference>
<dbReference type="InterPro" id="IPR002759">
    <property type="entry name" value="Pop5/Rpp14/Rnp2-like"/>
</dbReference>
<dbReference type="InterPro" id="IPR038085">
    <property type="entry name" value="Rnp2-like_sf"/>
</dbReference>
<dbReference type="Pfam" id="PF01900">
    <property type="entry name" value="RNase_P_Rpp14"/>
    <property type="match status" value="1"/>
</dbReference>
<dbReference type="SUPFAM" id="SSF160350">
    <property type="entry name" value="Rnp2-like"/>
    <property type="match status" value="1"/>
</dbReference>
<protein>
    <recommendedName>
        <fullName evidence="1">Ribonuclease P protein component 2</fullName>
        <shortName evidence="1">RNase P component 2</shortName>
        <ecNumber evidence="1">3.1.26.5</ecNumber>
    </recommendedName>
    <alternativeName>
        <fullName evidence="1">Pop5</fullName>
    </alternativeName>
</protein>
<gene>
    <name evidence="1" type="primary">rnp2</name>
    <name type="ordered locus">NP_3736A</name>
</gene>
<keyword id="KW-0963">Cytoplasm</keyword>
<keyword id="KW-0255">Endonuclease</keyword>
<keyword id="KW-0378">Hydrolase</keyword>
<keyword id="KW-0540">Nuclease</keyword>
<keyword id="KW-1185">Reference proteome</keyword>
<keyword id="KW-0819">tRNA processing</keyword>
<evidence type="ECO:0000255" key="1">
    <source>
        <dbReference type="HAMAP-Rule" id="MF_00755"/>
    </source>
</evidence>
<name>RNP2_NATPD</name>
<accession>Q3IPJ2</accession>
<reference key="1">
    <citation type="journal article" date="2005" name="Genome Res.">
        <title>Living with two extremes: conclusions from the genome sequence of Natronomonas pharaonis.</title>
        <authorList>
            <person name="Falb M."/>
            <person name="Pfeiffer F."/>
            <person name="Palm P."/>
            <person name="Rodewald K."/>
            <person name="Hickmann V."/>
            <person name="Tittor J."/>
            <person name="Oesterhelt D."/>
        </authorList>
    </citation>
    <scope>NUCLEOTIDE SEQUENCE [LARGE SCALE GENOMIC DNA]</scope>
    <source>
        <strain>ATCC 35678 / DSM 2160 / CIP 103997 / JCM 8858 / NBRC 14720 / NCIMB 2260 / Gabara</strain>
    </source>
</reference>
<organism>
    <name type="scientific">Natronomonas pharaonis (strain ATCC 35678 / DSM 2160 / CIP 103997 / JCM 8858 / NBRC 14720 / NCIMB 2260 / Gabara)</name>
    <name type="common">Halobacterium pharaonis</name>
    <dbReference type="NCBI Taxonomy" id="348780"/>
    <lineage>
        <taxon>Archaea</taxon>
        <taxon>Methanobacteriati</taxon>
        <taxon>Methanobacteriota</taxon>
        <taxon>Stenosarchaea group</taxon>
        <taxon>Halobacteria</taxon>
        <taxon>Halobacteriales</taxon>
        <taxon>Haloarculaceae</taxon>
        <taxon>Natronomonas</taxon>
    </lineage>
</organism>
<proteinExistence type="inferred from homology"/>